<evidence type="ECO:0000255" key="1">
    <source>
        <dbReference type="HAMAP-Rule" id="MF_01818"/>
    </source>
</evidence>
<proteinExistence type="inferred from homology"/>
<name>RNZ_MYCBP</name>
<dbReference type="EC" id="3.1.26.11" evidence="1"/>
<dbReference type="EMBL" id="AM408590">
    <property type="protein sequence ID" value="CAL72411.1"/>
    <property type="molecule type" value="Genomic_DNA"/>
</dbReference>
<dbReference type="RefSeq" id="WP_011799262.1">
    <property type="nucleotide sequence ID" value="NC_008769.1"/>
</dbReference>
<dbReference type="SMR" id="A1KL99"/>
<dbReference type="KEGG" id="mbb:BCG_2423"/>
<dbReference type="HOGENOM" id="CLU_031317_0_0_11"/>
<dbReference type="Proteomes" id="UP000001472">
    <property type="component" value="Chromosome"/>
</dbReference>
<dbReference type="GO" id="GO:0042781">
    <property type="term" value="F:3'-tRNA processing endoribonuclease activity"/>
    <property type="evidence" value="ECO:0007669"/>
    <property type="project" value="UniProtKB-UniRule"/>
</dbReference>
<dbReference type="GO" id="GO:0046872">
    <property type="term" value="F:metal ion binding"/>
    <property type="evidence" value="ECO:0007669"/>
    <property type="project" value="UniProtKB-KW"/>
</dbReference>
<dbReference type="CDD" id="cd07719">
    <property type="entry name" value="arylsulfatase_AtsA-like_MBL-fold"/>
    <property type="match status" value="1"/>
</dbReference>
<dbReference type="FunFam" id="3.60.15.10:FF:000085">
    <property type="entry name" value="Ribonuclease Z"/>
    <property type="match status" value="1"/>
</dbReference>
<dbReference type="Gene3D" id="3.60.15.10">
    <property type="entry name" value="Ribonuclease Z/Hydroxyacylglutathione hydrolase-like"/>
    <property type="match status" value="1"/>
</dbReference>
<dbReference type="HAMAP" id="MF_01818">
    <property type="entry name" value="RNase_Z_BN"/>
    <property type="match status" value="1"/>
</dbReference>
<dbReference type="InterPro" id="IPR044094">
    <property type="entry name" value="AtsA-like_MBL-fold"/>
</dbReference>
<dbReference type="InterPro" id="IPR001279">
    <property type="entry name" value="Metallo-B-lactamas"/>
</dbReference>
<dbReference type="InterPro" id="IPR036866">
    <property type="entry name" value="RibonucZ/Hydroxyglut_hydro"/>
</dbReference>
<dbReference type="InterPro" id="IPR013471">
    <property type="entry name" value="RNase_Z/BN"/>
</dbReference>
<dbReference type="NCBIfam" id="NF000806">
    <property type="entry name" value="PRK00055.2-4"/>
    <property type="match status" value="1"/>
</dbReference>
<dbReference type="PANTHER" id="PTHR46018">
    <property type="entry name" value="ZINC PHOSPHODIESTERASE ELAC PROTEIN 1"/>
    <property type="match status" value="1"/>
</dbReference>
<dbReference type="PANTHER" id="PTHR46018:SF2">
    <property type="entry name" value="ZINC PHOSPHODIESTERASE ELAC PROTEIN 1"/>
    <property type="match status" value="1"/>
</dbReference>
<dbReference type="Pfam" id="PF12706">
    <property type="entry name" value="Lactamase_B_2"/>
    <property type="match status" value="1"/>
</dbReference>
<dbReference type="SMART" id="SM00849">
    <property type="entry name" value="Lactamase_B"/>
    <property type="match status" value="1"/>
</dbReference>
<dbReference type="SUPFAM" id="SSF56281">
    <property type="entry name" value="Metallo-hydrolase/oxidoreductase"/>
    <property type="match status" value="1"/>
</dbReference>
<keyword id="KW-0255">Endonuclease</keyword>
<keyword id="KW-0378">Hydrolase</keyword>
<keyword id="KW-0479">Metal-binding</keyword>
<keyword id="KW-0540">Nuclease</keyword>
<keyword id="KW-0819">tRNA processing</keyword>
<keyword id="KW-0862">Zinc</keyword>
<sequence length="280" mass="29500">MLEITLLGTGSPIPDPDRAGPSTLVRAGAQAFLVDCGRGVLQRAAAVGVGAAGLSAVLLTHLHSDHIAELGDVLITSWVTNFAADPAPLPIIGPPGTAEVVEATLKAFGHDIGYRIAHHADLTTPPPIEVHEYTAGPAWDRDGVTIRVAPTDHRPVTPTIGFRIESDGASVVLAGDTVPCDSLDQLAAGADALVHTVIRKDIVTQIPQQRVKDICDYHSSVREAAATANRAGVGTLVMTHYVPAIGPGQEEQWRALAATEFSGRIEVGNDLHRVEVHPRR</sequence>
<organism>
    <name type="scientific">Mycobacterium bovis (strain BCG / Pasteur 1173P2)</name>
    <dbReference type="NCBI Taxonomy" id="410289"/>
    <lineage>
        <taxon>Bacteria</taxon>
        <taxon>Bacillati</taxon>
        <taxon>Actinomycetota</taxon>
        <taxon>Actinomycetes</taxon>
        <taxon>Mycobacteriales</taxon>
        <taxon>Mycobacteriaceae</taxon>
        <taxon>Mycobacterium</taxon>
        <taxon>Mycobacterium tuberculosis complex</taxon>
    </lineage>
</organism>
<comment type="function">
    <text evidence="1">Zinc phosphodiesterase, which displays some tRNA 3'-processing endonuclease activity. Probably involved in tRNA maturation, by removing a 3'-trailer from precursor tRNA.</text>
</comment>
<comment type="catalytic activity">
    <reaction evidence="1">
        <text>Endonucleolytic cleavage of RNA, removing extra 3' nucleotides from tRNA precursor, generating 3' termini of tRNAs. A 3'-hydroxy group is left at the tRNA terminus and a 5'-phosphoryl group is left at the trailer molecule.</text>
        <dbReference type="EC" id="3.1.26.11"/>
    </reaction>
</comment>
<comment type="cofactor">
    <cofactor evidence="1">
        <name>Zn(2+)</name>
        <dbReference type="ChEBI" id="CHEBI:29105"/>
    </cofactor>
    <text evidence="1">Binds 2 Zn(2+) ions.</text>
</comment>
<comment type="subunit">
    <text evidence="1">Homodimer.</text>
</comment>
<comment type="similarity">
    <text evidence="1">Belongs to the RNase Z family.</text>
</comment>
<accession>A1KL99</accession>
<gene>
    <name evidence="1" type="primary">rnz</name>
    <name type="ordered locus">BCG_2423</name>
</gene>
<feature type="chain" id="PRO_1000070302" description="Ribonuclease Z">
    <location>
        <begin position="1"/>
        <end position="280"/>
    </location>
</feature>
<feature type="active site" description="Proton acceptor" evidence="1">
    <location>
        <position position="65"/>
    </location>
</feature>
<feature type="binding site" evidence="1">
    <location>
        <position position="61"/>
    </location>
    <ligand>
        <name>Zn(2+)</name>
        <dbReference type="ChEBI" id="CHEBI:29105"/>
        <label>1</label>
        <note>catalytic</note>
    </ligand>
</feature>
<feature type="binding site" evidence="1">
    <location>
        <position position="63"/>
    </location>
    <ligand>
        <name>Zn(2+)</name>
        <dbReference type="ChEBI" id="CHEBI:29105"/>
        <label>1</label>
        <note>catalytic</note>
    </ligand>
</feature>
<feature type="binding site" evidence="1">
    <location>
        <position position="65"/>
    </location>
    <ligand>
        <name>Zn(2+)</name>
        <dbReference type="ChEBI" id="CHEBI:29105"/>
        <label>2</label>
        <note>catalytic</note>
    </ligand>
</feature>
<feature type="binding site" evidence="1">
    <location>
        <position position="66"/>
    </location>
    <ligand>
        <name>Zn(2+)</name>
        <dbReference type="ChEBI" id="CHEBI:29105"/>
        <label>2</label>
        <note>catalytic</note>
    </ligand>
</feature>
<feature type="binding site" evidence="1">
    <location>
        <position position="153"/>
    </location>
    <ligand>
        <name>Zn(2+)</name>
        <dbReference type="ChEBI" id="CHEBI:29105"/>
        <label>1</label>
        <note>catalytic</note>
    </ligand>
</feature>
<feature type="binding site" evidence="1">
    <location>
        <position position="176"/>
    </location>
    <ligand>
        <name>Zn(2+)</name>
        <dbReference type="ChEBI" id="CHEBI:29105"/>
        <label>1</label>
        <note>catalytic</note>
    </ligand>
</feature>
<feature type="binding site" evidence="1">
    <location>
        <position position="176"/>
    </location>
    <ligand>
        <name>Zn(2+)</name>
        <dbReference type="ChEBI" id="CHEBI:29105"/>
        <label>2</label>
        <note>catalytic</note>
    </ligand>
</feature>
<feature type="binding site" evidence="1">
    <location>
        <position position="240"/>
    </location>
    <ligand>
        <name>Zn(2+)</name>
        <dbReference type="ChEBI" id="CHEBI:29105"/>
        <label>2</label>
        <note>catalytic</note>
    </ligand>
</feature>
<protein>
    <recommendedName>
        <fullName evidence="1">Ribonuclease Z</fullName>
        <shortName evidence="1">RNase Z</shortName>
        <ecNumber evidence="1">3.1.26.11</ecNumber>
    </recommendedName>
    <alternativeName>
        <fullName evidence="1">tRNA 3 endonuclease</fullName>
    </alternativeName>
    <alternativeName>
        <fullName evidence="1">tRNase Z</fullName>
    </alternativeName>
</protein>
<reference key="1">
    <citation type="journal article" date="2007" name="Proc. Natl. Acad. Sci. U.S.A.">
        <title>Genome plasticity of BCG and impact on vaccine efficacy.</title>
        <authorList>
            <person name="Brosch R."/>
            <person name="Gordon S.V."/>
            <person name="Garnier T."/>
            <person name="Eiglmeier K."/>
            <person name="Frigui W."/>
            <person name="Valenti P."/>
            <person name="Dos Santos S."/>
            <person name="Duthoy S."/>
            <person name="Lacroix C."/>
            <person name="Garcia-Pelayo C."/>
            <person name="Inwald J.K."/>
            <person name="Golby P."/>
            <person name="Garcia J.N."/>
            <person name="Hewinson R.G."/>
            <person name="Behr M.A."/>
            <person name="Quail M.A."/>
            <person name="Churcher C."/>
            <person name="Barrell B.G."/>
            <person name="Parkhill J."/>
            <person name="Cole S.T."/>
        </authorList>
    </citation>
    <scope>NUCLEOTIDE SEQUENCE [LARGE SCALE GENOMIC DNA]</scope>
    <source>
        <strain>BCG / Pasteur 1173P2</strain>
    </source>
</reference>